<proteinExistence type="evidence at transcript level"/>
<feature type="chain" id="PRO_0000281864" description="AKT-interacting protein">
    <location>
        <begin position="1"/>
        <end position="292"/>
    </location>
</feature>
<feature type="domain" description="UBC core" evidence="2">
    <location>
        <begin position="74"/>
        <end position="222"/>
    </location>
</feature>
<feature type="region of interest" description="Disordered" evidence="3">
    <location>
        <begin position="1"/>
        <end position="63"/>
    </location>
</feature>
<feature type="compositionally biased region" description="Polar residues" evidence="3">
    <location>
        <begin position="1"/>
        <end position="11"/>
    </location>
</feature>
<feature type="compositionally biased region" description="Basic and acidic residues" evidence="3">
    <location>
        <begin position="14"/>
        <end position="23"/>
    </location>
</feature>
<feature type="modified residue" description="Phosphoserine" evidence="1">
    <location>
        <position position="30"/>
    </location>
</feature>
<reference key="1">
    <citation type="submission" date="2005-06" db="EMBL/GenBank/DDBJ databases">
        <title>DNA sequences of macaque genes expressed in brain or testis and its evolutionary implications.</title>
        <authorList>
            <consortium name="International consortium for macaque cDNA sequencing and analysis"/>
        </authorList>
    </citation>
    <scope>NUCLEOTIDE SEQUENCE [LARGE SCALE MRNA]</scope>
    <source>
        <tissue>Parietal cortex</tissue>
    </source>
</reference>
<name>AKTIP_MACFA</name>
<dbReference type="EMBL" id="AB169603">
    <property type="protein sequence ID" value="BAE01684.1"/>
    <property type="molecule type" value="mRNA"/>
</dbReference>
<dbReference type="RefSeq" id="NP_001271900.1">
    <property type="nucleotide sequence ID" value="NM_001284971.1"/>
</dbReference>
<dbReference type="RefSeq" id="XP_005591984.1">
    <property type="nucleotide sequence ID" value="XM_005591927.4"/>
</dbReference>
<dbReference type="RefSeq" id="XP_045238099.1">
    <property type="nucleotide sequence ID" value="XM_045382164.2"/>
</dbReference>
<dbReference type="SMR" id="Q4R5E1"/>
<dbReference type="STRING" id="9541.ENSMFAP00000026078"/>
<dbReference type="GeneID" id="101865159"/>
<dbReference type="CTD" id="64400"/>
<dbReference type="eggNOG" id="KOG0429">
    <property type="taxonomic scope" value="Eukaryota"/>
</dbReference>
<dbReference type="Proteomes" id="UP000233100">
    <property type="component" value="Unplaced"/>
</dbReference>
<dbReference type="GO" id="GO:0070695">
    <property type="term" value="C:FHF complex"/>
    <property type="evidence" value="ECO:0000250"/>
    <property type="project" value="UniProtKB"/>
</dbReference>
<dbReference type="GO" id="GO:0005886">
    <property type="term" value="C:plasma membrane"/>
    <property type="evidence" value="ECO:0007669"/>
    <property type="project" value="UniProtKB-SubCell"/>
</dbReference>
<dbReference type="GO" id="GO:0006915">
    <property type="term" value="P:apoptotic process"/>
    <property type="evidence" value="ECO:0007669"/>
    <property type="project" value="UniProtKB-KW"/>
</dbReference>
<dbReference type="GO" id="GO:0045022">
    <property type="term" value="P:early endosome to late endosome transport"/>
    <property type="evidence" value="ECO:0000250"/>
    <property type="project" value="UniProtKB"/>
</dbReference>
<dbReference type="GO" id="GO:0007032">
    <property type="term" value="P:endosome organization"/>
    <property type="evidence" value="ECO:0000250"/>
    <property type="project" value="UniProtKB"/>
</dbReference>
<dbReference type="GO" id="GO:0008333">
    <property type="term" value="P:endosome to lysosome transport"/>
    <property type="evidence" value="ECO:0000250"/>
    <property type="project" value="UniProtKB"/>
</dbReference>
<dbReference type="GO" id="GO:0007040">
    <property type="term" value="P:lysosome organization"/>
    <property type="evidence" value="ECO:0000250"/>
    <property type="project" value="UniProtKB"/>
</dbReference>
<dbReference type="GO" id="GO:1905719">
    <property type="term" value="P:protein localization to perinuclear region of cytoplasm"/>
    <property type="evidence" value="ECO:0000250"/>
    <property type="project" value="UniProtKB"/>
</dbReference>
<dbReference type="GO" id="GO:0015031">
    <property type="term" value="P:protein transport"/>
    <property type="evidence" value="ECO:0007669"/>
    <property type="project" value="UniProtKB-KW"/>
</dbReference>
<dbReference type="CDD" id="cd23814">
    <property type="entry name" value="UEV_AKTIP"/>
    <property type="match status" value="1"/>
</dbReference>
<dbReference type="FunFam" id="3.10.110.10:FF:000030">
    <property type="entry name" value="AKT-interacting protein-like isoform X2"/>
    <property type="match status" value="1"/>
</dbReference>
<dbReference type="Gene3D" id="3.10.110.10">
    <property type="entry name" value="Ubiquitin Conjugating Enzyme"/>
    <property type="match status" value="1"/>
</dbReference>
<dbReference type="InterPro" id="IPR050113">
    <property type="entry name" value="Ub_conjugating_enzyme"/>
</dbReference>
<dbReference type="InterPro" id="IPR000608">
    <property type="entry name" value="UBQ-conjugat_E2_core"/>
</dbReference>
<dbReference type="InterPro" id="IPR016135">
    <property type="entry name" value="UBQ-conjugating_enzyme/RWD"/>
</dbReference>
<dbReference type="PANTHER" id="PTHR24067">
    <property type="entry name" value="UBIQUITIN-CONJUGATING ENZYME E2"/>
    <property type="match status" value="1"/>
</dbReference>
<dbReference type="Pfam" id="PF00179">
    <property type="entry name" value="UQ_con"/>
    <property type="match status" value="1"/>
</dbReference>
<dbReference type="SMART" id="SM00212">
    <property type="entry name" value="UBCc"/>
    <property type="match status" value="1"/>
</dbReference>
<dbReference type="SUPFAM" id="SSF54495">
    <property type="entry name" value="UBC-like"/>
    <property type="match status" value="1"/>
</dbReference>
<dbReference type="PROSITE" id="PS50127">
    <property type="entry name" value="UBC_2"/>
    <property type="match status" value="1"/>
</dbReference>
<sequence length="292" mass="33128">MNPFWSMSTSSVRKRSEGEEKTLTGDVKTSPPRTAPKKQLPSIPKNALPITKPTSPAPAAQSTNGTHASYGPFYLEYSLLAEFTLVVKQKLPGVYVQPSYRSALMWFGVIFIRHGLYQDGVFKFTVYIPDNYPDGDCPRLVFDIPVFHPLVDPTSGELDVKRAFAKWRRNHNHIWQVLMYARRVFYKIDTASPLNPEAAVLYEKDIQLFKSKVVDSVKVCTARLFDQPKIEDPYAISFSPWNPSVHDEAREKMLTQKKPEEQHNKSVHVAGLSWVKPGSVQPFSKEEKTVAT</sequence>
<protein>
    <recommendedName>
        <fullName>AKT-interacting protein</fullName>
    </recommendedName>
    <alternativeName>
        <fullName>Fused toes protein homolog</fullName>
    </alternativeName>
</protein>
<evidence type="ECO:0000250" key="1">
    <source>
        <dbReference type="UniProtKB" id="Q9H8T0"/>
    </source>
</evidence>
<evidence type="ECO:0000255" key="2">
    <source>
        <dbReference type="PROSITE-ProRule" id="PRU00388"/>
    </source>
</evidence>
<evidence type="ECO:0000256" key="3">
    <source>
        <dbReference type="SAM" id="MobiDB-lite"/>
    </source>
</evidence>
<evidence type="ECO:0000305" key="4"/>
<organism>
    <name type="scientific">Macaca fascicularis</name>
    <name type="common">Crab-eating macaque</name>
    <name type="synonym">Cynomolgus monkey</name>
    <dbReference type="NCBI Taxonomy" id="9541"/>
    <lineage>
        <taxon>Eukaryota</taxon>
        <taxon>Metazoa</taxon>
        <taxon>Chordata</taxon>
        <taxon>Craniata</taxon>
        <taxon>Vertebrata</taxon>
        <taxon>Euteleostomi</taxon>
        <taxon>Mammalia</taxon>
        <taxon>Eutheria</taxon>
        <taxon>Euarchontoglires</taxon>
        <taxon>Primates</taxon>
        <taxon>Haplorrhini</taxon>
        <taxon>Catarrhini</taxon>
        <taxon>Cercopithecidae</taxon>
        <taxon>Cercopithecinae</taxon>
        <taxon>Macaca</taxon>
    </lineage>
</organism>
<accession>Q4R5E1</accession>
<comment type="function">
    <text evidence="1">Component of the FTS/Hook/FHIP complex (FHF complex). The FHF complex may function to promote vesicle trafficking and/or fusion via the homotypic vesicular protein sorting complex (the HOPS complex). Regulates apoptosis by enhancing phosphorylation and activation of AKT1. Increases release of TNFSF6 via the AKT1/GSK3B/NFATC1 signaling cascade. FHF complex promotes the distribution of AP-4 complex to the perinuclear area of the cell.</text>
</comment>
<comment type="subunit">
    <text evidence="1">Component of the FTS/Hook/FHIP complex (FHF complex), composed of AKTIP/FTS, FHIP1B, and one or more members of the Hook family of proteins HOOK1, HOOK2, and HOOK3. Interacts directly with HOOK1, HOOK2 and HOOK3. The FHF complex associates with the homotypic vesicular sorting complex (the HOPS complex). Also interacts with AKT1. May interact with FHIP1A.</text>
</comment>
<comment type="subcellular location">
    <subcellularLocation>
        <location evidence="1">Cytoplasm</location>
    </subcellularLocation>
    <subcellularLocation>
        <location evidence="1">Cell membrane</location>
        <topology evidence="1">Peripheral membrane protein</topology>
    </subcellularLocation>
</comment>
<comment type="similarity">
    <text evidence="2">Belongs to the ubiquitin-conjugating enzyme family. FTS subfamily.</text>
</comment>
<comment type="caution">
    <text evidence="4">Lacks the conserved Cys residue necessary for ubiquitin-conjugating enzyme E2 activity.</text>
</comment>
<gene>
    <name type="primary">AKTIP</name>
    <name type="synonym">FTS</name>
    <name type="ORF">QnpA-16528</name>
</gene>
<keyword id="KW-0053">Apoptosis</keyword>
<keyword id="KW-1003">Cell membrane</keyword>
<keyword id="KW-0963">Cytoplasm</keyword>
<keyword id="KW-0472">Membrane</keyword>
<keyword id="KW-0597">Phosphoprotein</keyword>
<keyword id="KW-0653">Protein transport</keyword>
<keyword id="KW-1185">Reference proteome</keyword>
<keyword id="KW-0813">Transport</keyword>